<evidence type="ECO:0000255" key="1">
    <source>
        <dbReference type="HAMAP-Rule" id="MF_01542"/>
    </source>
</evidence>
<feature type="chain" id="PRO_1000146667" description="UPF0349 protein BCB4264_A5077">
    <location>
        <begin position="1"/>
        <end position="79"/>
    </location>
</feature>
<name>Y5077_BACC4</name>
<gene>
    <name type="ordered locus">BCB4264_A5077</name>
</gene>
<accession>B7HBI1</accession>
<sequence>MIKPLIEFCVGNLASGSQAALEKLEKDPNLDVMEYGCLGYCGICFEGPFALVNGEVVQGATVEELVNNVYEYLDENPMF</sequence>
<organism>
    <name type="scientific">Bacillus cereus (strain B4264)</name>
    <dbReference type="NCBI Taxonomy" id="405532"/>
    <lineage>
        <taxon>Bacteria</taxon>
        <taxon>Bacillati</taxon>
        <taxon>Bacillota</taxon>
        <taxon>Bacilli</taxon>
        <taxon>Bacillales</taxon>
        <taxon>Bacillaceae</taxon>
        <taxon>Bacillus</taxon>
        <taxon>Bacillus cereus group</taxon>
    </lineage>
</organism>
<comment type="similarity">
    <text evidence="1">Belongs to the UPF0349 family.</text>
</comment>
<proteinExistence type="inferred from homology"/>
<reference key="1">
    <citation type="submission" date="2008-10" db="EMBL/GenBank/DDBJ databases">
        <title>Genome sequence of Bacillus cereus B4264.</title>
        <authorList>
            <person name="Dodson R.J."/>
            <person name="Durkin A.S."/>
            <person name="Rosovitz M.J."/>
            <person name="Rasko D.A."/>
            <person name="Hoffmaster A."/>
            <person name="Ravel J."/>
            <person name="Sutton G."/>
        </authorList>
    </citation>
    <scope>NUCLEOTIDE SEQUENCE [LARGE SCALE GENOMIC DNA]</scope>
    <source>
        <strain>B4264</strain>
    </source>
</reference>
<protein>
    <recommendedName>
        <fullName evidence="1">UPF0349 protein BCB4264_A5077</fullName>
    </recommendedName>
</protein>
<dbReference type="EMBL" id="CP001176">
    <property type="protein sequence ID" value="ACK62338.1"/>
    <property type="molecule type" value="Genomic_DNA"/>
</dbReference>
<dbReference type="RefSeq" id="WP_000595026.1">
    <property type="nucleotide sequence ID" value="NZ_VEHB01000013.1"/>
</dbReference>
<dbReference type="SMR" id="B7HBI1"/>
<dbReference type="KEGG" id="bcb:BCB4264_A5077"/>
<dbReference type="HOGENOM" id="CLU_182025_0_0_9"/>
<dbReference type="Proteomes" id="UP000007096">
    <property type="component" value="Chromosome"/>
</dbReference>
<dbReference type="HAMAP" id="MF_01542">
    <property type="entry name" value="UPF0349"/>
    <property type="match status" value="1"/>
</dbReference>
<dbReference type="InterPro" id="IPR009910">
    <property type="entry name" value="DUF1450"/>
</dbReference>
<dbReference type="InterPro" id="IPR022916">
    <property type="entry name" value="UPF0349"/>
</dbReference>
<dbReference type="NCBIfam" id="NF010190">
    <property type="entry name" value="PRK13669.1"/>
    <property type="match status" value="1"/>
</dbReference>
<dbReference type="Pfam" id="PF07293">
    <property type="entry name" value="DUF1450"/>
    <property type="match status" value="1"/>
</dbReference>